<reference evidence="5" key="1">
    <citation type="journal article" date="2007" name="Nature">
        <title>Evolution of genes and genomes on the Drosophila phylogeny.</title>
        <authorList>
            <consortium name="Drosophila 12 genomes consortium"/>
        </authorList>
    </citation>
    <scope>NUCLEOTIDE SEQUENCE [LARGE SCALE GENOMIC DNA]</scope>
    <source>
        <strain evidence="5">Tai18E2 / Tucson 14021-0261.01</strain>
    </source>
</reference>
<organism>
    <name type="scientific">Drosophila yakuba</name>
    <name type="common">Fruit fly</name>
    <dbReference type="NCBI Taxonomy" id="7245"/>
    <lineage>
        <taxon>Eukaryota</taxon>
        <taxon>Metazoa</taxon>
        <taxon>Ecdysozoa</taxon>
        <taxon>Arthropoda</taxon>
        <taxon>Hexapoda</taxon>
        <taxon>Insecta</taxon>
        <taxon>Pterygota</taxon>
        <taxon>Neoptera</taxon>
        <taxon>Endopterygota</taxon>
        <taxon>Diptera</taxon>
        <taxon>Brachycera</taxon>
        <taxon>Muscomorpha</taxon>
        <taxon>Ephydroidea</taxon>
        <taxon>Drosophilidae</taxon>
        <taxon>Drosophila</taxon>
        <taxon>Sophophora</taxon>
    </lineage>
</organism>
<protein>
    <recommendedName>
        <fullName evidence="1">UPAR/Ly6 domain-containing protein qvr</fullName>
    </recommendedName>
    <alternativeName>
        <fullName evidence="1">Protein quiver</fullName>
    </alternativeName>
    <alternativeName>
        <fullName evidence="1">Protein sleepless</fullName>
    </alternativeName>
</protein>
<comment type="function">
    <text evidence="1">Bifunctional regulator of neuronal activity in the mushroom body, and possibly other regions of the brain, that acts as a signaling molecule required for homeostatic regulation of sleep under normal conditions and after sleep deprivation. Reduces neuronal excitability by enhancing Sh/shaker K(+) channel activity; possibly by stabilizing Sh/shaker to increase protein levels, accelerating its activation kinetics, slowing C-type inactivation and enhancing recovery from inactivation. Specifically affects the A-type K(+) current. Antagonizes nicotinic acetylcholine receptors (nAChRs) to reduce synaptic transmission, possibly by preventing their localization to the cell surface. Required for regulation of neuromuscular excitability and plasticity at neuromuscular junctions.</text>
</comment>
<comment type="subunit">
    <text evidence="1">Interacts (via loop 2 of the three-fingered Ly-6 domain) with Sh/shaker; this interaction may stabilize both components of the complex and may be required for targeting or retention of Sh/shaker to neural cell projections. Interacts (via loop 2 of the three-fingered Ly-6 domain) with nAChRalpha3 and potentially other nicotinic acetylcholine receptors; this interaction is required for antagonism of nicotinic acetylcholine receptors.</text>
</comment>
<comment type="subcellular location">
    <subcellularLocation>
        <location evidence="1">Cell membrane</location>
        <topology evidence="1">Lipid-anchor</topology>
        <topology evidence="1">GPI-anchor</topology>
        <orientation evidence="1">Extracellular side</orientation>
    </subcellularLocation>
    <subcellularLocation>
        <location evidence="1">Membrane raft</location>
        <topology evidence="1">Lipid-anchor</topology>
        <topology evidence="1">GPI-anchor</topology>
        <orientation evidence="1">Extracellular side</orientation>
    </subcellularLocation>
</comment>
<comment type="tissue specificity">
    <text evidence="1">Expressed in mushroom body (at protein level); overlaps with expression of Sh/shaker and nicotinic acetylcholine receptor (nAChR) components also involved in sleep regulation. Expressed in the adult brain and head. Enriched in the mushroom body, anterior optic tubercle, superior protocerebrum, antennal nerve and visual projection neuron fibers projecting into the lobula plate of the optic lobe.</text>
</comment>
<comment type="domain">
    <text evidence="1">Consists of a single Ly-6 domain, adopting a three finger fold stabilized by 5 disulfide bonds. The first loop contains a region essential for protein folding or that is required for localization to the cell surface. The second loop mediates protein-protein interactions.</text>
</comment>
<comment type="PTM">
    <text evidence="1">N-glycosylated probably on Asn-57.</text>
</comment>
<comment type="similarity">
    <text evidence="4">Belongs to the quiver family.</text>
</comment>
<dbReference type="EMBL" id="CM000158">
    <property type="protein sequence ID" value="EDW90916.1"/>
    <property type="molecule type" value="Genomic_DNA"/>
</dbReference>
<dbReference type="GlyCosmos" id="B4P641">
    <property type="glycosylation" value="1 site, No reported glycans"/>
</dbReference>
<dbReference type="EnsemblMetazoa" id="FBtr0258882">
    <property type="protein sequence ID" value="FBpp0257374"/>
    <property type="gene ID" value="FBgn0230111"/>
</dbReference>
<dbReference type="EnsemblMetazoa" id="XM_002091168.4">
    <property type="protein sequence ID" value="XP_002091204.1"/>
    <property type="gene ID" value="LOC6530272"/>
</dbReference>
<dbReference type="GeneID" id="6530272"/>
<dbReference type="KEGG" id="dya:Dyak_GE12364"/>
<dbReference type="eggNOG" id="ENOG502S199">
    <property type="taxonomic scope" value="Eukaryota"/>
</dbReference>
<dbReference type="HOGENOM" id="CLU_137010_0_0_1"/>
<dbReference type="OMA" id="FCERDNC"/>
<dbReference type="OrthoDB" id="9991292at2759"/>
<dbReference type="PhylomeDB" id="B4P641"/>
<dbReference type="ChiTaRS" id="qvr">
    <property type="organism name" value="fly"/>
</dbReference>
<dbReference type="Proteomes" id="UP000002282">
    <property type="component" value="Chromosome 2R"/>
</dbReference>
<dbReference type="GO" id="GO:0009897">
    <property type="term" value="C:external side of plasma membrane"/>
    <property type="evidence" value="ECO:0007669"/>
    <property type="project" value="EnsemblMetazoa"/>
</dbReference>
<dbReference type="GO" id="GO:0045121">
    <property type="term" value="C:membrane raft"/>
    <property type="evidence" value="ECO:0007669"/>
    <property type="project" value="UniProtKB-SubCell"/>
</dbReference>
<dbReference type="GO" id="GO:0005886">
    <property type="term" value="C:plasma membrane"/>
    <property type="evidence" value="ECO:0000250"/>
    <property type="project" value="UniProtKB"/>
</dbReference>
<dbReference type="GO" id="GO:0030550">
    <property type="term" value="F:acetylcholine receptor inhibitor activity"/>
    <property type="evidence" value="ECO:0007669"/>
    <property type="project" value="EnsemblMetazoa"/>
</dbReference>
<dbReference type="GO" id="GO:0034235">
    <property type="term" value="F:GPI anchor binding"/>
    <property type="evidence" value="ECO:0000250"/>
    <property type="project" value="UniProtKB"/>
</dbReference>
<dbReference type="GO" id="GO:0099104">
    <property type="term" value="F:potassium channel activator activity"/>
    <property type="evidence" value="ECO:0007669"/>
    <property type="project" value="EnsemblMetazoa"/>
</dbReference>
<dbReference type="GO" id="GO:0045837">
    <property type="term" value="P:negative regulation of membrane potential"/>
    <property type="evidence" value="ECO:0007669"/>
    <property type="project" value="EnsemblMetazoa"/>
</dbReference>
<dbReference type="GO" id="GO:0045938">
    <property type="term" value="P:positive regulation of circadian sleep/wake cycle, sleep"/>
    <property type="evidence" value="ECO:0007669"/>
    <property type="project" value="EnsemblMetazoa"/>
</dbReference>
<dbReference type="GO" id="GO:0045187">
    <property type="term" value="P:regulation of circadian sleep/wake cycle, sleep"/>
    <property type="evidence" value="ECO:0000250"/>
    <property type="project" value="UniProtKB"/>
</dbReference>
<dbReference type="GO" id="GO:0032222">
    <property type="term" value="P:regulation of synaptic transmission, cholinergic"/>
    <property type="evidence" value="ECO:0007669"/>
    <property type="project" value="EnsemblMetazoa"/>
</dbReference>
<dbReference type="GO" id="GO:0048511">
    <property type="term" value="P:rhythmic process"/>
    <property type="evidence" value="ECO:0007669"/>
    <property type="project" value="UniProtKB-KW"/>
</dbReference>
<dbReference type="GO" id="GO:0030431">
    <property type="term" value="P:sleep"/>
    <property type="evidence" value="ECO:0007669"/>
    <property type="project" value="EnsemblMetazoa"/>
</dbReference>
<dbReference type="CDD" id="cd23595">
    <property type="entry name" value="TFP_LU_ECD_Qvr"/>
    <property type="match status" value="1"/>
</dbReference>
<dbReference type="InterPro" id="IPR031424">
    <property type="entry name" value="QVR-like"/>
</dbReference>
<dbReference type="InterPro" id="IPR050975">
    <property type="entry name" value="Sleep_regulator"/>
</dbReference>
<dbReference type="PANTHER" id="PTHR33562">
    <property type="entry name" value="ATILLA, ISOFORM B-RELATED-RELATED"/>
    <property type="match status" value="1"/>
</dbReference>
<dbReference type="PANTHER" id="PTHR33562:SF31">
    <property type="entry name" value="PROTEIN QUIVER"/>
    <property type="match status" value="1"/>
</dbReference>
<dbReference type="Pfam" id="PF17064">
    <property type="entry name" value="QVR"/>
    <property type="match status" value="1"/>
</dbReference>
<accession>B4P641</accession>
<proteinExistence type="inferred from homology"/>
<sequence>MWTQRNAVGNWLLVLTAVIGFLTFIWIPQTSAECQTRSIYCYECDSWTDARCKDPFNYTALPRDQPPLMTCNGCCVKMVRHQRSPYEVVRRMCTSQLQINLFMVDHVCMMESSGNGHMCFCEEDMCNSSKNLHTNGCQLHLIAIAVAVSWLMGQLLSR</sequence>
<name>QVR_DROYA</name>
<feature type="signal peptide" evidence="2">
    <location>
        <begin position="1"/>
        <end position="32"/>
    </location>
</feature>
<feature type="chain" id="PRO_0000365476" description="UPAR/Ly6 domain-containing protein qvr" evidence="2">
    <location>
        <begin position="33"/>
        <end position="127"/>
    </location>
</feature>
<feature type="propeptide" id="PRO_0000365477" description="Removed in mature form" evidence="1">
    <location>
        <begin position="128"/>
        <end position="158"/>
    </location>
</feature>
<feature type="transmembrane region" description="Helical" evidence="2">
    <location>
        <begin position="136"/>
        <end position="156"/>
    </location>
</feature>
<feature type="region of interest" description="Loop 1; may be required for cell surface localization or be essential for protein folding" evidence="1">
    <location>
        <begin position="54"/>
        <end position="67"/>
    </location>
</feature>
<feature type="region of interest" description="Loop 2; required for interaction with Sh/shaker and nAChRalpha3/Nicotinic acetylcholine receptor alpha3" evidence="1">
    <location>
        <begin position="77"/>
        <end position="91"/>
    </location>
</feature>
<feature type="lipid moiety-binding region" description="GPI-anchor amidated asparagine" evidence="1">
    <location>
        <position position="127"/>
    </location>
</feature>
<feature type="glycosylation site" description="N-linked (GlcNAc...) asparagine" evidence="1 3">
    <location>
        <position position="57"/>
    </location>
</feature>
<feature type="disulfide bond" evidence="1">
    <location>
        <begin position="41"/>
        <end position="75"/>
    </location>
</feature>
<feature type="disulfide bond" evidence="1">
    <location>
        <begin position="44"/>
        <end position="52"/>
    </location>
</feature>
<feature type="disulfide bond" evidence="1">
    <location>
        <begin position="71"/>
        <end position="93"/>
    </location>
</feature>
<feature type="disulfide bond" evidence="1">
    <location>
        <begin position="108"/>
        <end position="119"/>
    </location>
</feature>
<feature type="disulfide bond" evidence="1">
    <location>
        <begin position="121"/>
        <end position="126"/>
    </location>
</feature>
<keyword id="KW-0090">Biological rhythms</keyword>
<keyword id="KW-1003">Cell membrane</keyword>
<keyword id="KW-1015">Disulfide bond</keyword>
<keyword id="KW-0325">Glycoprotein</keyword>
<keyword id="KW-0336">GPI-anchor</keyword>
<keyword id="KW-0449">Lipoprotein</keyword>
<keyword id="KW-0472">Membrane</keyword>
<keyword id="KW-0732">Signal</keyword>
<keyword id="KW-0812">Transmembrane</keyword>
<keyword id="KW-1133">Transmembrane helix</keyword>
<gene>
    <name evidence="1" type="primary">qvr</name>
    <name evidence="1" type="synonym">sss</name>
    <name type="ORF">GE12364</name>
</gene>
<evidence type="ECO:0000250" key="1">
    <source>
        <dbReference type="UniProtKB" id="B5A5T4"/>
    </source>
</evidence>
<evidence type="ECO:0000255" key="2"/>
<evidence type="ECO:0000255" key="3">
    <source>
        <dbReference type="PROSITE-ProRule" id="PRU00498"/>
    </source>
</evidence>
<evidence type="ECO:0000305" key="4"/>
<evidence type="ECO:0000312" key="5">
    <source>
        <dbReference type="EMBL" id="EDW90916.1"/>
    </source>
</evidence>